<dbReference type="EC" id="1.18.1.2"/>
<dbReference type="EMBL" id="U10545">
    <property type="protein sequence ID" value="AAA79131.1"/>
    <property type="molecule type" value="mRNA"/>
</dbReference>
<dbReference type="PIR" id="T08035">
    <property type="entry name" value="T08035"/>
</dbReference>
<dbReference type="SMR" id="P53991"/>
<dbReference type="DIP" id="DIP-58595N"/>
<dbReference type="IntAct" id="P53991">
    <property type="interactions" value="1"/>
</dbReference>
<dbReference type="PaxDb" id="3055-EDP00292"/>
<dbReference type="eggNOG" id="KOG1158">
    <property type="taxonomic scope" value="Eukaryota"/>
</dbReference>
<dbReference type="UniPathway" id="UPA00091"/>
<dbReference type="GO" id="GO:0009570">
    <property type="term" value="C:chloroplast stroma"/>
    <property type="evidence" value="ECO:0007669"/>
    <property type="project" value="UniProtKB-SubCell"/>
</dbReference>
<dbReference type="GO" id="GO:0009535">
    <property type="term" value="C:chloroplast thylakoid membrane"/>
    <property type="evidence" value="ECO:0007669"/>
    <property type="project" value="UniProtKB-SubCell"/>
</dbReference>
<dbReference type="GO" id="GO:0004324">
    <property type="term" value="F:ferredoxin-NADP+ reductase activity"/>
    <property type="evidence" value="ECO:0007669"/>
    <property type="project" value="UniProtKB-EC"/>
</dbReference>
<dbReference type="GO" id="GO:0015979">
    <property type="term" value="P:photosynthesis"/>
    <property type="evidence" value="ECO:0007669"/>
    <property type="project" value="UniProtKB-UniPathway"/>
</dbReference>
<dbReference type="CDD" id="cd06208">
    <property type="entry name" value="CYPOR_like_FNR"/>
    <property type="match status" value="1"/>
</dbReference>
<dbReference type="FunFam" id="3.40.50.80:FF:000008">
    <property type="entry name" value="Ferredoxin--NADP reductase, chloroplastic"/>
    <property type="match status" value="1"/>
</dbReference>
<dbReference type="Gene3D" id="3.40.50.80">
    <property type="entry name" value="Nucleotide-binding domain of ferredoxin-NADP reductase (FNR) module"/>
    <property type="match status" value="1"/>
</dbReference>
<dbReference type="Gene3D" id="2.40.30.10">
    <property type="entry name" value="Translation factors"/>
    <property type="match status" value="1"/>
</dbReference>
<dbReference type="InterPro" id="IPR017927">
    <property type="entry name" value="FAD-bd_FR_type"/>
</dbReference>
<dbReference type="InterPro" id="IPR001709">
    <property type="entry name" value="Flavoprot_Pyr_Nucl_cyt_Rdtase"/>
</dbReference>
<dbReference type="InterPro" id="IPR015701">
    <property type="entry name" value="FNR"/>
</dbReference>
<dbReference type="InterPro" id="IPR039261">
    <property type="entry name" value="FNR_nucleotide-bd"/>
</dbReference>
<dbReference type="InterPro" id="IPR001433">
    <property type="entry name" value="OxRdtase_FAD/NAD-bd"/>
</dbReference>
<dbReference type="InterPro" id="IPR017938">
    <property type="entry name" value="Riboflavin_synthase-like_b-brl"/>
</dbReference>
<dbReference type="PANTHER" id="PTHR43314">
    <property type="match status" value="1"/>
</dbReference>
<dbReference type="Pfam" id="PF00175">
    <property type="entry name" value="NAD_binding_1"/>
    <property type="match status" value="1"/>
</dbReference>
<dbReference type="PIRSF" id="PIRSF000361">
    <property type="entry name" value="Frd-NADP+_RD"/>
    <property type="match status" value="1"/>
</dbReference>
<dbReference type="PRINTS" id="PR00371">
    <property type="entry name" value="FPNCR"/>
</dbReference>
<dbReference type="SUPFAM" id="SSF52343">
    <property type="entry name" value="Ferredoxin reductase-like, C-terminal NADP-linked domain"/>
    <property type="match status" value="1"/>
</dbReference>
<dbReference type="SUPFAM" id="SSF63380">
    <property type="entry name" value="Riboflavin synthase domain-like"/>
    <property type="match status" value="1"/>
</dbReference>
<dbReference type="PROSITE" id="PS51384">
    <property type="entry name" value="FAD_FR"/>
    <property type="match status" value="1"/>
</dbReference>
<keyword id="KW-0150">Chloroplast</keyword>
<keyword id="KW-0903">Direct protein sequencing</keyword>
<keyword id="KW-0249">Electron transport</keyword>
<keyword id="KW-0274">FAD</keyword>
<keyword id="KW-0285">Flavoprotein</keyword>
<keyword id="KW-0472">Membrane</keyword>
<keyword id="KW-0488">Methylation</keyword>
<keyword id="KW-0521">NADP</keyword>
<keyword id="KW-0560">Oxidoreductase</keyword>
<keyword id="KW-0602">Photosynthesis</keyword>
<keyword id="KW-0934">Plastid</keyword>
<keyword id="KW-0793">Thylakoid</keyword>
<keyword id="KW-0809">Transit peptide</keyword>
<keyword id="KW-0813">Transport</keyword>
<accession>P53991</accession>
<gene>
    <name type="primary">PETH</name>
    <name type="synonym">FNR</name>
</gene>
<reference key="1">
    <citation type="journal article" date="1994" name="Plant Physiol.">
        <title>A cDNA clone encoding a ferredoxin-NADP+ reductase from Chlamydomonas reinhardtii.</title>
        <authorList>
            <person name="Kitayama M."/>
            <person name="Kitayama K."/>
            <person name="Togasaki R.K."/>
        </authorList>
    </citation>
    <scope>NUCLEOTIDE SEQUENCE [MRNA]</scope>
</reference>
<reference key="2">
    <citation type="book" date="1996" name="Proceedings of XIth international conference on methods in protein structure analysis">
        <title>Specific post-translational methylation of three lysine residues in Chlamydomonas reinhardtii ferredoxin-NADP reductase.</title>
        <authorList>
            <person name="Decottignies P."/>
            <person name="Flesch V."/>
            <person name="Jacquot J.-P."/>
            <person name="Schmitter J.-M."/>
            <person name="le Marechal P."/>
        </authorList>
    </citation>
    <scope>PROTEIN SEQUENCE OF 36-265</scope>
    <scope>METHYLATION AT LYS-118; LYS-124 AND LYS-170</scope>
</reference>
<comment type="function">
    <text>May play a key role in regulating the relative amounts of cyclic and non-cyclic electron flow to meet the demands of the plant for ATP and reducing power.</text>
</comment>
<comment type="catalytic activity">
    <reaction>
        <text>2 reduced [2Fe-2S]-[ferredoxin] + NADP(+) + H(+) = 2 oxidized [2Fe-2S]-[ferredoxin] + NADPH</text>
        <dbReference type="Rhea" id="RHEA:20125"/>
        <dbReference type="Rhea" id="RHEA-COMP:10000"/>
        <dbReference type="Rhea" id="RHEA-COMP:10001"/>
        <dbReference type="ChEBI" id="CHEBI:15378"/>
        <dbReference type="ChEBI" id="CHEBI:33737"/>
        <dbReference type="ChEBI" id="CHEBI:33738"/>
        <dbReference type="ChEBI" id="CHEBI:57783"/>
        <dbReference type="ChEBI" id="CHEBI:58349"/>
        <dbReference type="EC" id="1.18.1.2"/>
    </reaction>
</comment>
<comment type="cofactor">
    <cofactor>
        <name>FAD</name>
        <dbReference type="ChEBI" id="CHEBI:57692"/>
    </cofactor>
</comment>
<comment type="pathway">
    <text>Energy metabolism; photosynthesis.</text>
</comment>
<comment type="subcellular location">
    <subcellularLocation>
        <location>Plastid</location>
        <location>Chloroplast stroma</location>
    </subcellularLocation>
    <subcellularLocation>
        <location evidence="4">Plastid</location>
        <location evidence="4">Chloroplast thylakoid membrane</location>
        <topology evidence="4">Peripheral membrane protein</topology>
        <orientation evidence="4">Stromal side</orientation>
    </subcellularLocation>
    <text>In the vicinity of the photosystem I in the non-stacked and fringe portion of the membrane.</text>
</comment>
<comment type="similarity">
    <text evidence="4">Belongs to the ferredoxin--NADP reductase type 1 family.</text>
</comment>
<proteinExistence type="evidence at protein level"/>
<feature type="transit peptide" description="Chloroplast" evidence="3">
    <location>
        <begin position="1"/>
        <end position="35"/>
    </location>
</feature>
<feature type="chain" id="PRO_0000019407" description="Ferredoxin--NADP reductase, chloroplastic">
    <location>
        <begin position="36"/>
        <end position="354"/>
    </location>
</feature>
<feature type="domain" description="FAD-binding FR-type" evidence="2">
    <location>
        <begin position="69"/>
        <end position="198"/>
    </location>
</feature>
<feature type="binding site" evidence="1">
    <location>
        <begin position="130"/>
        <end position="133"/>
    </location>
    <ligand>
        <name>FAD</name>
        <dbReference type="ChEBI" id="CHEBI:57692"/>
    </ligand>
</feature>
<feature type="binding site" evidence="1">
    <location>
        <position position="133"/>
    </location>
    <ligand>
        <name>NADP(+)</name>
        <dbReference type="ChEBI" id="CHEBI:58349"/>
    </ligand>
</feature>
<feature type="binding site" evidence="1">
    <location>
        <begin position="151"/>
        <end position="153"/>
    </location>
    <ligand>
        <name>FAD</name>
        <dbReference type="ChEBI" id="CHEBI:57692"/>
    </ligand>
</feature>
<feature type="binding site" evidence="1">
    <location>
        <position position="153"/>
    </location>
    <ligand>
        <name>NADP(+)</name>
        <dbReference type="ChEBI" id="CHEBI:58349"/>
    </ligand>
</feature>
<feature type="binding site" evidence="1">
    <location>
        <position position="157"/>
    </location>
    <ligand>
        <name>FAD</name>
        <dbReference type="ChEBI" id="CHEBI:57692"/>
    </ligand>
</feature>
<feature type="binding site" evidence="1">
    <location>
        <begin position="172"/>
        <end position="174"/>
    </location>
    <ligand>
        <name>FAD</name>
        <dbReference type="ChEBI" id="CHEBI:57692"/>
    </ligand>
</feature>
<feature type="binding site" evidence="1">
    <location>
        <position position="213"/>
    </location>
    <ligand>
        <name>FAD</name>
        <dbReference type="ChEBI" id="CHEBI:57692"/>
    </ligand>
</feature>
<feature type="binding site" evidence="1">
    <location>
        <position position="213"/>
    </location>
    <ligand>
        <name>NADP(+)</name>
        <dbReference type="ChEBI" id="CHEBI:58349"/>
    </ligand>
</feature>
<feature type="binding site" evidence="1">
    <location>
        <begin position="245"/>
        <end position="246"/>
    </location>
    <ligand>
        <name>NADP(+)</name>
        <dbReference type="ChEBI" id="CHEBI:58349"/>
    </ligand>
</feature>
<feature type="binding site" evidence="1">
    <location>
        <begin position="275"/>
        <end position="276"/>
    </location>
    <ligand>
        <name>NADP(+)</name>
        <dbReference type="ChEBI" id="CHEBI:58349"/>
    </ligand>
</feature>
<feature type="binding site" evidence="1">
    <location>
        <position position="285"/>
    </location>
    <ligand>
        <name>NADP(+)</name>
        <dbReference type="ChEBI" id="CHEBI:58349"/>
    </ligand>
</feature>
<feature type="binding site" evidence="1">
    <location>
        <begin position="313"/>
        <end position="314"/>
    </location>
    <ligand>
        <name>NADP(+)</name>
        <dbReference type="ChEBI" id="CHEBI:58349"/>
    </ligand>
</feature>
<feature type="binding site" evidence="1">
    <location>
        <position position="352"/>
    </location>
    <ligand>
        <name>NADP(+)</name>
        <dbReference type="ChEBI" id="CHEBI:58349"/>
    </ligand>
</feature>
<feature type="modified residue" description="N6,N6,N6-trimethyllysine" evidence="3">
    <location>
        <position position="118"/>
    </location>
</feature>
<feature type="modified residue" description="N6,N6,N6-trimethyllysine" evidence="3">
    <location>
        <position position="124"/>
    </location>
</feature>
<feature type="modified residue" description="N6,N6-dimethyllysine" evidence="3">
    <location>
        <position position="170"/>
    </location>
</feature>
<organism>
    <name type="scientific">Chlamydomonas reinhardtii</name>
    <name type="common">Chlamydomonas smithii</name>
    <dbReference type="NCBI Taxonomy" id="3055"/>
    <lineage>
        <taxon>Eukaryota</taxon>
        <taxon>Viridiplantae</taxon>
        <taxon>Chlorophyta</taxon>
        <taxon>core chlorophytes</taxon>
        <taxon>Chlorophyceae</taxon>
        <taxon>CS clade</taxon>
        <taxon>Chlamydomonadales</taxon>
        <taxon>Chlamydomonadaceae</taxon>
        <taxon>Chlamydomonas</taxon>
    </lineage>
</organism>
<protein>
    <recommendedName>
        <fullName>Ferredoxin--NADP reductase, chloroplastic</fullName>
        <shortName>FNR</shortName>
        <ecNumber>1.18.1.2</ecNumber>
    </recommendedName>
</protein>
<evidence type="ECO:0000250" key="1"/>
<evidence type="ECO:0000255" key="2">
    <source>
        <dbReference type="PROSITE-ProRule" id="PRU00716"/>
    </source>
</evidence>
<evidence type="ECO:0000269" key="3">
    <source ref="2"/>
</evidence>
<evidence type="ECO:0000305" key="4"/>
<sequence>MASLRKPSNHADRACSRRLRVATRVAGRRMCRPVAATKASTAVTTDMSKRTVPTKLEEGEMPLNTYSNKAPFKAKVRSVEKITGPKATGETCHIIIETEGKIPFWEGQSYGVIPPGTKINSKGKEVPTARLYSIASSRYGDDGDGQTASLCVRRAVYVDPETGKEDPAKKGLCSNFLCDATPGTEISMTGPTGKVLLLPADANAPLICVATGTGIAPFRSFWRRCFIENVPSYKFTGLFWLFMGVGNSDAKLYDEELQAIAKAYPGQFRLDYALSREQNNRKGGKMYIQDKVEEYADEIFDLLDNGAHMYFCGLKGMMPGIQDMLERVAKEKGLNYEEWVEGLKHKNQWHVEVY</sequence>
<name>FENR_CHLRE</name>